<evidence type="ECO:0000255" key="1">
    <source>
        <dbReference type="HAMAP-Rule" id="MF_01209"/>
    </source>
</evidence>
<evidence type="ECO:0000305" key="2"/>
<feature type="chain" id="PRO_0000112354" description="Carbamoyl phosphate synthase small chain">
    <location>
        <begin position="1"/>
        <end position="374"/>
    </location>
</feature>
<feature type="domain" description="Glutamine amidotransferase type-1" evidence="1">
    <location>
        <begin position="187"/>
        <end position="374"/>
    </location>
</feature>
<feature type="region of interest" description="CPSase" evidence="1">
    <location>
        <begin position="1"/>
        <end position="183"/>
    </location>
</feature>
<feature type="active site" description="Nucleophile" evidence="1">
    <location>
        <position position="264"/>
    </location>
</feature>
<feature type="active site" evidence="1">
    <location>
        <position position="348"/>
    </location>
</feature>
<feature type="active site" evidence="1">
    <location>
        <position position="350"/>
    </location>
</feature>
<feature type="binding site" evidence="1">
    <location>
        <position position="41"/>
    </location>
    <ligand>
        <name>L-glutamine</name>
        <dbReference type="ChEBI" id="CHEBI:58359"/>
    </ligand>
</feature>
<feature type="binding site" evidence="1">
    <location>
        <position position="235"/>
    </location>
    <ligand>
        <name>L-glutamine</name>
        <dbReference type="ChEBI" id="CHEBI:58359"/>
    </ligand>
</feature>
<feature type="binding site" evidence="1">
    <location>
        <position position="237"/>
    </location>
    <ligand>
        <name>L-glutamine</name>
        <dbReference type="ChEBI" id="CHEBI:58359"/>
    </ligand>
</feature>
<feature type="binding site" evidence="1">
    <location>
        <position position="265"/>
    </location>
    <ligand>
        <name>L-glutamine</name>
        <dbReference type="ChEBI" id="CHEBI:58359"/>
    </ligand>
</feature>
<feature type="binding site" evidence="1">
    <location>
        <position position="268"/>
    </location>
    <ligand>
        <name>L-glutamine</name>
        <dbReference type="ChEBI" id="CHEBI:58359"/>
    </ligand>
</feature>
<feature type="binding site" evidence="1">
    <location>
        <position position="306"/>
    </location>
    <ligand>
        <name>L-glutamine</name>
        <dbReference type="ChEBI" id="CHEBI:58359"/>
    </ligand>
</feature>
<feature type="binding site" evidence="1">
    <location>
        <position position="308"/>
    </location>
    <ligand>
        <name>L-glutamine</name>
        <dbReference type="ChEBI" id="CHEBI:58359"/>
    </ligand>
</feature>
<feature type="binding site" evidence="1">
    <location>
        <position position="309"/>
    </location>
    <ligand>
        <name>L-glutamine</name>
        <dbReference type="ChEBI" id="CHEBI:58359"/>
    </ligand>
</feature>
<gene>
    <name evidence="1" type="primary">carA</name>
    <name type="ordered locus">ZMO1618</name>
</gene>
<accession>O50235</accession>
<accession>Q5NM18</accession>
<reference key="1">
    <citation type="submission" date="1998-08" db="EMBL/GenBank/DDBJ databases">
        <authorList>
            <person name="Lee J.S."/>
            <person name="Jin S.J."/>
            <person name="Kang H.L."/>
            <person name="Kang H.S."/>
        </authorList>
    </citation>
    <scope>NUCLEOTIDE SEQUENCE [GENOMIC DNA]</scope>
    <source>
        <strain>ATCC 31821 / ZM4 / CP4</strain>
    </source>
</reference>
<reference key="2">
    <citation type="journal article" date="2005" name="Nat. Biotechnol.">
        <title>The genome sequence of the ethanologenic bacterium Zymomonas mobilis ZM4.</title>
        <authorList>
            <person name="Seo J.-S."/>
            <person name="Chong H."/>
            <person name="Park H.S."/>
            <person name="Yoon K.-O."/>
            <person name="Jung C."/>
            <person name="Kim J.J."/>
            <person name="Hong J.H."/>
            <person name="Kim H."/>
            <person name="Kim J.-H."/>
            <person name="Kil J.-I."/>
            <person name="Park C.J."/>
            <person name="Oh H.-M."/>
            <person name="Lee J.-S."/>
            <person name="Jin S.-J."/>
            <person name="Um H.-W."/>
            <person name="Lee H.-J."/>
            <person name="Oh S.-J."/>
            <person name="Kim J.Y."/>
            <person name="Kang H.L."/>
            <person name="Lee S.Y."/>
            <person name="Lee K.J."/>
            <person name="Kang H.S."/>
        </authorList>
    </citation>
    <scope>NUCLEOTIDE SEQUENCE [LARGE SCALE GENOMIC DNA]</scope>
    <source>
        <strain>ATCC 31821 / ZM4 / CP4</strain>
    </source>
</reference>
<keyword id="KW-0028">Amino-acid biosynthesis</keyword>
<keyword id="KW-0055">Arginine biosynthesis</keyword>
<keyword id="KW-0067">ATP-binding</keyword>
<keyword id="KW-0315">Glutamine amidotransferase</keyword>
<keyword id="KW-0436">Ligase</keyword>
<keyword id="KW-0547">Nucleotide-binding</keyword>
<keyword id="KW-0665">Pyrimidine biosynthesis</keyword>
<keyword id="KW-1185">Reference proteome</keyword>
<sequence>MVLADGQMIWGRGFGATGAKVGEVCFHTAMTGYEEIMTDPSFASQIINFTFPHIGNVGANREDVEAKTLHALGCIVREDVTAPSNFRSLWRFDSWLKDHDRIGLAGVDTRALTGLLRKKGAQNAVIAHDPKGQFDIPALIETARSWAGLQGMDLARSVSTHQSYNWQEGIWSLQNGYSVVDNQKGPHVVAIDYGLKHNILRNLVEAGARVTVVKATASFDEVMAHKPDGVFLSNGPGDPAATAEYAVPVIRQLLDIKMPIFGICLGHQLLALAVGATTYKMHQGHRGANHPVKRLDDSKVEITSMNHGFAVATDSLPEQARPTHLSLFDGSLAGLELTDRPAFSVQYHPEASPGPQDSYYLFTKFIDLIAKERP</sequence>
<dbReference type="EC" id="6.3.5.5" evidence="1"/>
<dbReference type="EMBL" id="AF086791">
    <property type="protein sequence ID" value="AAC70355.1"/>
    <property type="status" value="ALT_INIT"/>
    <property type="molecule type" value="Genomic_DNA"/>
</dbReference>
<dbReference type="EMBL" id="AE008692">
    <property type="protein sequence ID" value="AAV90242.1"/>
    <property type="status" value="ALT_INIT"/>
    <property type="molecule type" value="Genomic_DNA"/>
</dbReference>
<dbReference type="PIR" id="T33716">
    <property type="entry name" value="T33716"/>
</dbReference>
<dbReference type="SMR" id="O50235"/>
<dbReference type="STRING" id="264203.ZMO1618"/>
<dbReference type="MEROPS" id="C26.954"/>
<dbReference type="KEGG" id="zmo:ZMO1618"/>
<dbReference type="eggNOG" id="COG0505">
    <property type="taxonomic scope" value="Bacteria"/>
</dbReference>
<dbReference type="HOGENOM" id="CLU_035901_2_1_5"/>
<dbReference type="UniPathway" id="UPA00068">
    <property type="reaction ID" value="UER00171"/>
</dbReference>
<dbReference type="UniPathway" id="UPA00070">
    <property type="reaction ID" value="UER00115"/>
</dbReference>
<dbReference type="Proteomes" id="UP000001173">
    <property type="component" value="Chromosome"/>
</dbReference>
<dbReference type="GO" id="GO:0005524">
    <property type="term" value="F:ATP binding"/>
    <property type="evidence" value="ECO:0007669"/>
    <property type="project" value="UniProtKB-UniRule"/>
</dbReference>
<dbReference type="GO" id="GO:0004088">
    <property type="term" value="F:carbamoyl-phosphate synthase (glutamine-hydrolyzing) activity"/>
    <property type="evidence" value="ECO:0007669"/>
    <property type="project" value="UniProtKB-UniRule"/>
</dbReference>
<dbReference type="GO" id="GO:0004359">
    <property type="term" value="F:glutaminase activity"/>
    <property type="evidence" value="ECO:0007669"/>
    <property type="project" value="RHEA"/>
</dbReference>
<dbReference type="GO" id="GO:0006207">
    <property type="term" value="P:'de novo' pyrimidine nucleobase biosynthetic process"/>
    <property type="evidence" value="ECO:0007669"/>
    <property type="project" value="InterPro"/>
</dbReference>
<dbReference type="GO" id="GO:0044205">
    <property type="term" value="P:'de novo' UMP biosynthetic process"/>
    <property type="evidence" value="ECO:0007669"/>
    <property type="project" value="UniProtKB-UniRule"/>
</dbReference>
<dbReference type="GO" id="GO:0006541">
    <property type="term" value="P:glutamine metabolic process"/>
    <property type="evidence" value="ECO:0007669"/>
    <property type="project" value="InterPro"/>
</dbReference>
<dbReference type="GO" id="GO:0006526">
    <property type="term" value="P:L-arginine biosynthetic process"/>
    <property type="evidence" value="ECO:0007669"/>
    <property type="project" value="UniProtKB-UniRule"/>
</dbReference>
<dbReference type="CDD" id="cd01744">
    <property type="entry name" value="GATase1_CPSase"/>
    <property type="match status" value="1"/>
</dbReference>
<dbReference type="Gene3D" id="3.40.50.880">
    <property type="match status" value="1"/>
</dbReference>
<dbReference type="Gene3D" id="3.50.30.20">
    <property type="entry name" value="Carbamoyl-phosphate synthase small subunit, N-terminal domain"/>
    <property type="match status" value="1"/>
</dbReference>
<dbReference type="HAMAP" id="MF_01209">
    <property type="entry name" value="CPSase_S_chain"/>
    <property type="match status" value="1"/>
</dbReference>
<dbReference type="InterPro" id="IPR050472">
    <property type="entry name" value="Anth_synth/Amidotransfase"/>
</dbReference>
<dbReference type="InterPro" id="IPR006274">
    <property type="entry name" value="CarbamoylP_synth_ssu"/>
</dbReference>
<dbReference type="InterPro" id="IPR002474">
    <property type="entry name" value="CarbamoylP_synth_ssu_N"/>
</dbReference>
<dbReference type="InterPro" id="IPR036480">
    <property type="entry name" value="CarbP_synth_ssu_N_sf"/>
</dbReference>
<dbReference type="InterPro" id="IPR029062">
    <property type="entry name" value="Class_I_gatase-like"/>
</dbReference>
<dbReference type="InterPro" id="IPR035686">
    <property type="entry name" value="CPSase_GATase1"/>
</dbReference>
<dbReference type="InterPro" id="IPR017926">
    <property type="entry name" value="GATASE"/>
</dbReference>
<dbReference type="NCBIfam" id="TIGR01368">
    <property type="entry name" value="CPSaseIIsmall"/>
    <property type="match status" value="1"/>
</dbReference>
<dbReference type="NCBIfam" id="NF009475">
    <property type="entry name" value="PRK12838.1"/>
    <property type="match status" value="1"/>
</dbReference>
<dbReference type="PANTHER" id="PTHR43418:SF7">
    <property type="entry name" value="CARBAMOYL-PHOSPHATE SYNTHASE SMALL CHAIN"/>
    <property type="match status" value="1"/>
</dbReference>
<dbReference type="PANTHER" id="PTHR43418">
    <property type="entry name" value="MULTIFUNCTIONAL TRYPTOPHAN BIOSYNTHESIS PROTEIN-RELATED"/>
    <property type="match status" value="1"/>
</dbReference>
<dbReference type="Pfam" id="PF00988">
    <property type="entry name" value="CPSase_sm_chain"/>
    <property type="match status" value="1"/>
</dbReference>
<dbReference type="Pfam" id="PF00117">
    <property type="entry name" value="GATase"/>
    <property type="match status" value="1"/>
</dbReference>
<dbReference type="PRINTS" id="PR00097">
    <property type="entry name" value="ANTSNTHASEII"/>
</dbReference>
<dbReference type="PRINTS" id="PR00099">
    <property type="entry name" value="CPSGATASE"/>
</dbReference>
<dbReference type="PRINTS" id="PR00096">
    <property type="entry name" value="GATASE"/>
</dbReference>
<dbReference type="SMART" id="SM01097">
    <property type="entry name" value="CPSase_sm_chain"/>
    <property type="match status" value="1"/>
</dbReference>
<dbReference type="SUPFAM" id="SSF52021">
    <property type="entry name" value="Carbamoyl phosphate synthetase, small subunit N-terminal domain"/>
    <property type="match status" value="1"/>
</dbReference>
<dbReference type="SUPFAM" id="SSF52317">
    <property type="entry name" value="Class I glutamine amidotransferase-like"/>
    <property type="match status" value="1"/>
</dbReference>
<dbReference type="PROSITE" id="PS51273">
    <property type="entry name" value="GATASE_TYPE_1"/>
    <property type="match status" value="1"/>
</dbReference>
<comment type="function">
    <text evidence="1">Small subunit of the glutamine-dependent carbamoyl phosphate synthetase (CPSase). CPSase catalyzes the formation of carbamoyl phosphate from the ammonia moiety of glutamine, carbonate, and phosphate donated by ATP, constituting the first step of 2 biosynthetic pathways, one leading to arginine and/or urea and the other to pyrimidine nucleotides. The small subunit (glutamine amidotransferase) binds and cleaves glutamine to supply the large subunit with the substrate ammonia.</text>
</comment>
<comment type="catalytic activity">
    <reaction evidence="1">
        <text>hydrogencarbonate + L-glutamine + 2 ATP + H2O = carbamoyl phosphate + L-glutamate + 2 ADP + phosphate + 2 H(+)</text>
        <dbReference type="Rhea" id="RHEA:18633"/>
        <dbReference type="ChEBI" id="CHEBI:15377"/>
        <dbReference type="ChEBI" id="CHEBI:15378"/>
        <dbReference type="ChEBI" id="CHEBI:17544"/>
        <dbReference type="ChEBI" id="CHEBI:29985"/>
        <dbReference type="ChEBI" id="CHEBI:30616"/>
        <dbReference type="ChEBI" id="CHEBI:43474"/>
        <dbReference type="ChEBI" id="CHEBI:58228"/>
        <dbReference type="ChEBI" id="CHEBI:58359"/>
        <dbReference type="ChEBI" id="CHEBI:456216"/>
        <dbReference type="EC" id="6.3.5.5"/>
    </reaction>
</comment>
<comment type="catalytic activity">
    <molecule>Carbamoyl phosphate synthase small chain</molecule>
    <reaction evidence="1">
        <text>L-glutamine + H2O = L-glutamate + NH4(+)</text>
        <dbReference type="Rhea" id="RHEA:15889"/>
        <dbReference type="ChEBI" id="CHEBI:15377"/>
        <dbReference type="ChEBI" id="CHEBI:28938"/>
        <dbReference type="ChEBI" id="CHEBI:29985"/>
        <dbReference type="ChEBI" id="CHEBI:58359"/>
    </reaction>
</comment>
<comment type="pathway">
    <text evidence="1">Amino-acid biosynthesis; L-arginine biosynthesis; carbamoyl phosphate from bicarbonate: step 1/1.</text>
</comment>
<comment type="pathway">
    <text evidence="1">Pyrimidine metabolism; UMP biosynthesis via de novo pathway; (S)-dihydroorotate from bicarbonate: step 1/3.</text>
</comment>
<comment type="subunit">
    <text evidence="1">Composed of two chains; the small (or glutamine) chain promotes the hydrolysis of glutamine to ammonia, which is used by the large (or ammonia) chain to synthesize carbamoyl phosphate. Tetramer of heterodimers (alpha,beta)4.</text>
</comment>
<comment type="similarity">
    <text evidence="1">Belongs to the CarA family.</text>
</comment>
<comment type="sequence caution" evidence="2">
    <conflict type="erroneous initiation">
        <sequence resource="EMBL-CDS" id="AAC70355"/>
    </conflict>
</comment>
<comment type="sequence caution" evidence="2">
    <conflict type="erroneous initiation">
        <sequence resource="EMBL-CDS" id="AAV90242"/>
    </conflict>
</comment>
<proteinExistence type="inferred from homology"/>
<protein>
    <recommendedName>
        <fullName evidence="1">Carbamoyl phosphate synthase small chain</fullName>
        <ecNumber evidence="1">6.3.5.5</ecNumber>
    </recommendedName>
    <alternativeName>
        <fullName evidence="1">Carbamoyl phosphate synthetase glutamine chain</fullName>
    </alternativeName>
</protein>
<organism>
    <name type="scientific">Zymomonas mobilis subsp. mobilis (strain ATCC 31821 / ZM4 / CP4)</name>
    <dbReference type="NCBI Taxonomy" id="264203"/>
    <lineage>
        <taxon>Bacteria</taxon>
        <taxon>Pseudomonadati</taxon>
        <taxon>Pseudomonadota</taxon>
        <taxon>Alphaproteobacteria</taxon>
        <taxon>Sphingomonadales</taxon>
        <taxon>Zymomonadaceae</taxon>
        <taxon>Zymomonas</taxon>
    </lineage>
</organism>
<name>CARA_ZYMMO</name>